<sequence>MAYRKLGRTSSQRKAMLRDLTTDLLINESIVTTEARAKEIRKTVEKMITLGKRGDLHARRQAAAYVRNEIASENYDEATDKYTSTTALQKLFSEIAPRYAERNGGYTRILKTEPRRGDAAPMAIIELV</sequence>
<evidence type="ECO:0000255" key="1">
    <source>
        <dbReference type="HAMAP-Rule" id="MF_01368"/>
    </source>
</evidence>
<evidence type="ECO:0000305" key="2"/>
<accession>Q1J8Y6</accession>
<name>RL17_STRPF</name>
<feature type="chain" id="PRO_1000055964" description="Large ribosomal subunit protein bL17">
    <location>
        <begin position="1"/>
        <end position="128"/>
    </location>
</feature>
<gene>
    <name evidence="1" type="primary">rplQ</name>
    <name type="ordered locus">MGAS10750_Spy0075</name>
</gene>
<comment type="subunit">
    <text evidence="1">Part of the 50S ribosomal subunit. Contacts protein L32.</text>
</comment>
<comment type="similarity">
    <text evidence="1">Belongs to the bacterial ribosomal protein bL17 family.</text>
</comment>
<dbReference type="EMBL" id="CP000262">
    <property type="protein sequence ID" value="ABF37025.1"/>
    <property type="molecule type" value="Genomic_DNA"/>
</dbReference>
<dbReference type="SMR" id="Q1J8Y6"/>
<dbReference type="KEGG" id="spi:MGAS10750_Spy0075"/>
<dbReference type="HOGENOM" id="CLU_074407_2_2_9"/>
<dbReference type="Proteomes" id="UP000002434">
    <property type="component" value="Chromosome"/>
</dbReference>
<dbReference type="GO" id="GO:0022625">
    <property type="term" value="C:cytosolic large ribosomal subunit"/>
    <property type="evidence" value="ECO:0007669"/>
    <property type="project" value="TreeGrafter"/>
</dbReference>
<dbReference type="GO" id="GO:0003735">
    <property type="term" value="F:structural constituent of ribosome"/>
    <property type="evidence" value="ECO:0007669"/>
    <property type="project" value="InterPro"/>
</dbReference>
<dbReference type="GO" id="GO:0006412">
    <property type="term" value="P:translation"/>
    <property type="evidence" value="ECO:0007669"/>
    <property type="project" value="UniProtKB-UniRule"/>
</dbReference>
<dbReference type="FunFam" id="3.90.1030.10:FF:000002">
    <property type="entry name" value="50S ribosomal protein L17"/>
    <property type="match status" value="1"/>
</dbReference>
<dbReference type="Gene3D" id="3.90.1030.10">
    <property type="entry name" value="Ribosomal protein L17"/>
    <property type="match status" value="1"/>
</dbReference>
<dbReference type="HAMAP" id="MF_01368">
    <property type="entry name" value="Ribosomal_bL17"/>
    <property type="match status" value="1"/>
</dbReference>
<dbReference type="InterPro" id="IPR000456">
    <property type="entry name" value="Ribosomal_bL17"/>
</dbReference>
<dbReference type="InterPro" id="IPR047859">
    <property type="entry name" value="Ribosomal_bL17_CS"/>
</dbReference>
<dbReference type="InterPro" id="IPR036373">
    <property type="entry name" value="Ribosomal_bL17_sf"/>
</dbReference>
<dbReference type="NCBIfam" id="TIGR00059">
    <property type="entry name" value="L17"/>
    <property type="match status" value="1"/>
</dbReference>
<dbReference type="PANTHER" id="PTHR14413:SF16">
    <property type="entry name" value="LARGE RIBOSOMAL SUBUNIT PROTEIN BL17M"/>
    <property type="match status" value="1"/>
</dbReference>
<dbReference type="PANTHER" id="PTHR14413">
    <property type="entry name" value="RIBOSOMAL PROTEIN L17"/>
    <property type="match status" value="1"/>
</dbReference>
<dbReference type="Pfam" id="PF01196">
    <property type="entry name" value="Ribosomal_L17"/>
    <property type="match status" value="1"/>
</dbReference>
<dbReference type="SUPFAM" id="SSF64263">
    <property type="entry name" value="Prokaryotic ribosomal protein L17"/>
    <property type="match status" value="1"/>
</dbReference>
<dbReference type="PROSITE" id="PS01167">
    <property type="entry name" value="RIBOSOMAL_L17"/>
    <property type="match status" value="1"/>
</dbReference>
<protein>
    <recommendedName>
        <fullName evidence="1">Large ribosomal subunit protein bL17</fullName>
    </recommendedName>
    <alternativeName>
        <fullName evidence="2">50S ribosomal protein L17</fullName>
    </alternativeName>
</protein>
<organism>
    <name type="scientific">Streptococcus pyogenes serotype M4 (strain MGAS10750)</name>
    <dbReference type="NCBI Taxonomy" id="370554"/>
    <lineage>
        <taxon>Bacteria</taxon>
        <taxon>Bacillati</taxon>
        <taxon>Bacillota</taxon>
        <taxon>Bacilli</taxon>
        <taxon>Lactobacillales</taxon>
        <taxon>Streptococcaceae</taxon>
        <taxon>Streptococcus</taxon>
    </lineage>
</organism>
<proteinExistence type="inferred from homology"/>
<keyword id="KW-0687">Ribonucleoprotein</keyword>
<keyword id="KW-0689">Ribosomal protein</keyword>
<reference key="1">
    <citation type="journal article" date="2006" name="Proc. Natl. Acad. Sci. U.S.A.">
        <title>Molecular genetic anatomy of inter- and intraserotype variation in the human bacterial pathogen group A Streptococcus.</title>
        <authorList>
            <person name="Beres S.B."/>
            <person name="Richter E.W."/>
            <person name="Nagiec M.J."/>
            <person name="Sumby P."/>
            <person name="Porcella S.F."/>
            <person name="DeLeo F.R."/>
            <person name="Musser J.M."/>
        </authorList>
    </citation>
    <scope>NUCLEOTIDE SEQUENCE [LARGE SCALE GENOMIC DNA]</scope>
    <source>
        <strain>MGAS10750</strain>
    </source>
</reference>